<gene>
    <name evidence="1" type="primary">rplW</name>
    <name evidence="1" type="synonym">rpl23</name>
    <name type="ordered locus">Npun_R4388</name>
</gene>
<reference key="1">
    <citation type="journal article" date="2013" name="Plant Physiol.">
        <title>A Nostoc punctiforme Sugar Transporter Necessary to Establish a Cyanobacterium-Plant Symbiosis.</title>
        <authorList>
            <person name="Ekman M."/>
            <person name="Picossi S."/>
            <person name="Campbell E.L."/>
            <person name="Meeks J.C."/>
            <person name="Flores E."/>
        </authorList>
    </citation>
    <scope>NUCLEOTIDE SEQUENCE [LARGE SCALE GENOMIC DNA]</scope>
    <source>
        <strain>ATCC 29133 / PCC 73102</strain>
    </source>
</reference>
<organism>
    <name type="scientific">Nostoc punctiforme (strain ATCC 29133 / PCC 73102)</name>
    <dbReference type="NCBI Taxonomy" id="63737"/>
    <lineage>
        <taxon>Bacteria</taxon>
        <taxon>Bacillati</taxon>
        <taxon>Cyanobacteriota</taxon>
        <taxon>Cyanophyceae</taxon>
        <taxon>Nostocales</taxon>
        <taxon>Nostocaceae</taxon>
        <taxon>Nostoc</taxon>
    </lineage>
</organism>
<sequence>MPSFDPRDLADLVRRPIVTEKATILMEQNKYTFEVIPKASKPEIKAAIEDLFQVKVVKVNTNLPPRKKRRVGKFIGYKPQYKRAIVTVAPGDEDKIRQVLFPEV</sequence>
<keyword id="KW-1185">Reference proteome</keyword>
<keyword id="KW-0687">Ribonucleoprotein</keyword>
<keyword id="KW-0689">Ribosomal protein</keyword>
<keyword id="KW-0694">RNA-binding</keyword>
<keyword id="KW-0699">rRNA-binding</keyword>
<dbReference type="EMBL" id="CP001037">
    <property type="protein sequence ID" value="ACC82761.1"/>
    <property type="molecule type" value="Genomic_DNA"/>
</dbReference>
<dbReference type="RefSeq" id="WP_012410723.1">
    <property type="nucleotide sequence ID" value="NC_010628.1"/>
</dbReference>
<dbReference type="SMR" id="B2ITQ3"/>
<dbReference type="STRING" id="63737.Npun_R4388"/>
<dbReference type="EnsemblBacteria" id="ACC82761">
    <property type="protein sequence ID" value="ACC82761"/>
    <property type="gene ID" value="Npun_R4388"/>
</dbReference>
<dbReference type="KEGG" id="npu:Npun_R4388"/>
<dbReference type="eggNOG" id="COG0089">
    <property type="taxonomic scope" value="Bacteria"/>
</dbReference>
<dbReference type="HOGENOM" id="CLU_037562_3_2_3"/>
<dbReference type="OrthoDB" id="9793353at2"/>
<dbReference type="PhylomeDB" id="B2ITQ3"/>
<dbReference type="Proteomes" id="UP000001191">
    <property type="component" value="Chromosome"/>
</dbReference>
<dbReference type="GO" id="GO:1990904">
    <property type="term" value="C:ribonucleoprotein complex"/>
    <property type="evidence" value="ECO:0007669"/>
    <property type="project" value="UniProtKB-KW"/>
</dbReference>
<dbReference type="GO" id="GO:0005840">
    <property type="term" value="C:ribosome"/>
    <property type="evidence" value="ECO:0007669"/>
    <property type="project" value="UniProtKB-KW"/>
</dbReference>
<dbReference type="GO" id="GO:0019843">
    <property type="term" value="F:rRNA binding"/>
    <property type="evidence" value="ECO:0007669"/>
    <property type="project" value="UniProtKB-UniRule"/>
</dbReference>
<dbReference type="GO" id="GO:0003735">
    <property type="term" value="F:structural constituent of ribosome"/>
    <property type="evidence" value="ECO:0007669"/>
    <property type="project" value="InterPro"/>
</dbReference>
<dbReference type="GO" id="GO:0006412">
    <property type="term" value="P:translation"/>
    <property type="evidence" value="ECO:0007669"/>
    <property type="project" value="UniProtKB-UniRule"/>
</dbReference>
<dbReference type="FunFam" id="3.30.70.330:FF:000001">
    <property type="entry name" value="50S ribosomal protein L23"/>
    <property type="match status" value="1"/>
</dbReference>
<dbReference type="Gene3D" id="3.30.70.330">
    <property type="match status" value="1"/>
</dbReference>
<dbReference type="HAMAP" id="MF_01369_B">
    <property type="entry name" value="Ribosomal_uL23_B"/>
    <property type="match status" value="1"/>
</dbReference>
<dbReference type="InterPro" id="IPR012677">
    <property type="entry name" value="Nucleotide-bd_a/b_plait_sf"/>
</dbReference>
<dbReference type="InterPro" id="IPR013025">
    <property type="entry name" value="Ribosomal_uL23-like"/>
</dbReference>
<dbReference type="InterPro" id="IPR012678">
    <property type="entry name" value="Ribosomal_uL23/eL15/eS24_sf"/>
</dbReference>
<dbReference type="NCBIfam" id="NF004363">
    <property type="entry name" value="PRK05738.2-4"/>
    <property type="match status" value="1"/>
</dbReference>
<dbReference type="NCBIfam" id="NF004368">
    <property type="entry name" value="PRK05738.3-4"/>
    <property type="match status" value="1"/>
</dbReference>
<dbReference type="PANTHER" id="PTHR11620">
    <property type="entry name" value="60S RIBOSOMAL PROTEIN L23A"/>
    <property type="match status" value="1"/>
</dbReference>
<dbReference type="Pfam" id="PF00276">
    <property type="entry name" value="Ribosomal_L23"/>
    <property type="match status" value="1"/>
</dbReference>
<dbReference type="SUPFAM" id="SSF54189">
    <property type="entry name" value="Ribosomal proteins S24e, L23 and L15e"/>
    <property type="match status" value="1"/>
</dbReference>
<comment type="function">
    <text evidence="1">One of the early assembly proteins it binds 23S rRNA. One of the proteins that surrounds the polypeptide exit tunnel on the outside of the ribosome. Forms the main docking site for trigger factor binding to the ribosome.</text>
</comment>
<comment type="subunit">
    <text evidence="1">Part of the 50S ribosomal subunit. Contacts protein L29, and trigger factor when it is bound to the ribosome.</text>
</comment>
<comment type="similarity">
    <text evidence="1">Belongs to the universal ribosomal protein uL23 family.</text>
</comment>
<feature type="chain" id="PRO_1000144594" description="Large ribosomal subunit protein uL23">
    <location>
        <begin position="1"/>
        <end position="104"/>
    </location>
</feature>
<proteinExistence type="inferred from homology"/>
<name>RL23_NOSP7</name>
<protein>
    <recommendedName>
        <fullName evidence="1">Large ribosomal subunit protein uL23</fullName>
    </recommendedName>
    <alternativeName>
        <fullName evidence="2">50S ribosomal protein L23</fullName>
    </alternativeName>
</protein>
<accession>B2ITQ3</accession>
<evidence type="ECO:0000255" key="1">
    <source>
        <dbReference type="HAMAP-Rule" id="MF_01369"/>
    </source>
</evidence>
<evidence type="ECO:0000305" key="2"/>